<feature type="initiator methionine" description="Removed" evidence="5">
    <location>
        <position position="1"/>
    </location>
</feature>
<feature type="chain" id="PRO_0000192897" description="V-type proton ATPase subunit G 1">
    <location>
        <begin position="2"/>
        <end position="118"/>
    </location>
</feature>
<feature type="modified residue" description="N-acetylalanine" evidence="5">
    <location>
        <position position="2"/>
    </location>
</feature>
<feature type="helix" evidence="12">
    <location>
        <begin position="29"/>
        <end position="90"/>
    </location>
</feature>
<feature type="helix" evidence="12">
    <location>
        <begin position="93"/>
        <end position="103"/>
    </location>
</feature>
<proteinExistence type="evidence at protein level"/>
<comment type="function">
    <text evidence="2 4 6">Subunit of the V1 complex of vacuolar(H+)-ATPase (V-ATPase), a multisubunit enzyme composed of a peripheral complex (V1) that hydrolyzes ATP and a membrane integral complex (V0) that translocates protons (PubMed:32001091, PubMed:33065002). V-ATPase is responsible for acidifying and maintaining the pH of intracellular compartments and in some cell types, is targeted to the plasma membrane, where it is responsible for acidifying the extracellular environment (PubMed:32001091). In aerobic conditions, involved in intracellular iron homeostasis, thus triggering the activity of Fe(2+) prolyl hydroxylase (PHD) enzymes, and leading to HIF1A hydroxylation and subsequent proteasomal degradation (PubMed:28296633).</text>
</comment>
<comment type="subunit">
    <text evidence="4">V-ATPase is a heteromultimeric enzyme made up of two complexes: the ATP-hydrolytic V1 complex and the proton translocation V0 complex (PubMed:33065002). The V1 complex consists of three catalytic AB heterodimers that form a heterohexamer, three peripheral stalks each consisting of EG heterodimers, one central rotor including subunits D and F, and the regulatory subunits C and H (PubMed:33065002). The proton translocation complex V0 consists of the proton transport subunit a, a ring of proteolipid subunits c9c'', rotary subunit d, subunits e and f, and the accessory subunits ATP6AP1/Ac45 and ATP6AP2/PRR (PubMed:33065002).</text>
</comment>
<comment type="interaction">
    <interactant intactId="EBI-711802">
        <id>O75348</id>
    </interactant>
    <interactant intactId="EBI-348639">
        <id>P36543</id>
        <label>ATP6V1E1</label>
    </interactant>
    <organismsDiffer>false</organismsDiffer>
    <experiments>3</experiments>
</comment>
<comment type="interaction">
    <interactant intactId="EBI-711802">
        <id>O75348</id>
    </interactant>
    <interactant intactId="EBI-8650380">
        <id>Q96A05</id>
        <label>ATP6V1E2</label>
    </interactant>
    <organismsDiffer>false</organismsDiffer>
    <experiments>12</experiments>
</comment>
<comment type="interaction">
    <interactant intactId="EBI-711802">
        <id>O75348</id>
    </interactant>
    <interactant intactId="EBI-618309">
        <id>Q08379</id>
        <label>GOLGA2</label>
    </interactant>
    <organismsDiffer>false</organismsDiffer>
    <experiments>3</experiments>
</comment>
<comment type="interaction">
    <interactant intactId="EBI-711802">
        <id>O75348</id>
    </interactant>
    <interactant intactId="EBI-5916454">
        <id>A6NEM1</id>
        <label>GOLGA6L9</label>
    </interactant>
    <organismsDiffer>false</organismsDiffer>
    <experiments>3</experiments>
</comment>
<comment type="interaction">
    <interactant intactId="EBI-711802">
        <id>O75348</id>
    </interactant>
    <interactant intactId="EBI-739467">
        <id>Q9H8Y8</id>
        <label>GORASP2</label>
    </interactant>
    <organismsDiffer>false</organismsDiffer>
    <experiments>5</experiments>
</comment>
<comment type="interaction">
    <interactant intactId="EBI-711802">
        <id>O75348</id>
    </interactant>
    <interactant intactId="EBI-740738">
        <id>O95751</id>
        <label>LDOC1</label>
    </interactant>
    <organismsDiffer>false</organismsDiffer>
    <experiments>4</experiments>
</comment>
<comment type="interaction">
    <interactant intactId="EBI-711802">
        <id>O75348</id>
    </interactant>
    <interactant intactId="EBI-12039345">
        <id>Q9UBR4-2</id>
        <label>LHX3</label>
    </interactant>
    <organismsDiffer>false</organismsDiffer>
    <experiments>3</experiments>
</comment>
<comment type="interaction">
    <interactant intactId="EBI-711802">
        <id>O75348</id>
    </interactant>
    <interactant intactId="EBI-1045155">
        <id>P43360</id>
        <label>MAGEA6</label>
    </interactant>
    <organismsDiffer>false</organismsDiffer>
    <experiments>3</experiments>
</comment>
<comment type="interaction">
    <interactant intactId="EBI-711802">
        <id>O75348</id>
    </interactant>
    <interactant intactId="EBI-741158">
        <id>Q96HA8</id>
        <label>NTAQ1</label>
    </interactant>
    <organismsDiffer>false</organismsDiffer>
    <experiments>3</experiments>
</comment>
<comment type="interaction">
    <interactant intactId="EBI-711802">
        <id>O75348</id>
    </interactant>
    <interactant intactId="EBI-302345">
        <id>Q8ND90</id>
        <label>PNMA1</label>
    </interactant>
    <organismsDiffer>false</organismsDiffer>
    <experiments>3</experiments>
</comment>
<comment type="subcellular location">
    <subcellularLocation>
        <location evidence="3">Apical cell membrane</location>
    </subcellularLocation>
</comment>
<comment type="tissue specificity">
    <text evidence="1 3">Kidney; localizes to early distal nephron, encompassing thick ascending limbs and distal convoluted tubules (at protein level) (PubMed:29993276). Ubiquitous (PubMed:12384298).</text>
</comment>
<comment type="similarity">
    <text evidence="7">Belongs to the V-ATPase G subunit family.</text>
</comment>
<dbReference type="EMBL" id="AF038954">
    <property type="protein sequence ID" value="AAC39868.1"/>
    <property type="molecule type" value="mRNA"/>
</dbReference>
<dbReference type="EMBL" id="CR456971">
    <property type="protein sequence ID" value="CAG33252.1"/>
    <property type="molecule type" value="mRNA"/>
</dbReference>
<dbReference type="EMBL" id="CR542237">
    <property type="protein sequence ID" value="CAG47033.1"/>
    <property type="molecule type" value="mRNA"/>
</dbReference>
<dbReference type="EMBL" id="AL160275">
    <property type="status" value="NOT_ANNOTATED_CDS"/>
    <property type="molecule type" value="Genomic_DNA"/>
</dbReference>
<dbReference type="EMBL" id="CH471090">
    <property type="protein sequence ID" value="EAW87424.1"/>
    <property type="molecule type" value="Genomic_DNA"/>
</dbReference>
<dbReference type="EMBL" id="BC008452">
    <property type="protein sequence ID" value="AAH08452.1"/>
    <property type="molecule type" value="mRNA"/>
</dbReference>
<dbReference type="CCDS" id="CCDS6807.1"/>
<dbReference type="RefSeq" id="NP_004879.1">
    <property type="nucleotide sequence ID" value="NM_004888.4"/>
</dbReference>
<dbReference type="PDB" id="6WLZ">
    <property type="method" value="EM"/>
    <property type="resolution" value="2.90 A"/>
    <property type="chains" value="K/L/M=1-118"/>
</dbReference>
<dbReference type="PDB" id="6WM2">
    <property type="method" value="EM"/>
    <property type="resolution" value="3.10 A"/>
    <property type="chains" value="K/L/M=1-118"/>
</dbReference>
<dbReference type="PDB" id="6WM3">
    <property type="method" value="EM"/>
    <property type="resolution" value="3.40 A"/>
    <property type="chains" value="K/L/M=1-118"/>
</dbReference>
<dbReference type="PDB" id="6WM4">
    <property type="method" value="EM"/>
    <property type="resolution" value="3.60 A"/>
    <property type="chains" value="K/L/M=1-118"/>
</dbReference>
<dbReference type="PDB" id="7U4T">
    <property type="method" value="EM"/>
    <property type="resolution" value="3.60 A"/>
    <property type="chains" value="K/L/M=1-118"/>
</dbReference>
<dbReference type="PDB" id="7UNF">
    <property type="method" value="EM"/>
    <property type="resolution" value="4.08 A"/>
    <property type="chains" value="e/f/g=1-118"/>
</dbReference>
<dbReference type="PDBsum" id="6WLZ"/>
<dbReference type="PDBsum" id="6WM2"/>
<dbReference type="PDBsum" id="6WM3"/>
<dbReference type="PDBsum" id="6WM4"/>
<dbReference type="PDBsum" id="7U4T"/>
<dbReference type="PDBsum" id="7UNF"/>
<dbReference type="EMDB" id="EMD-21845"/>
<dbReference type="EMDB" id="EMD-21847"/>
<dbReference type="EMDB" id="EMD-21848"/>
<dbReference type="EMDB" id="EMD-21849"/>
<dbReference type="EMDB" id="EMD-26334"/>
<dbReference type="EMDB" id="EMD-26623"/>
<dbReference type="SMR" id="O75348"/>
<dbReference type="BioGRID" id="114922">
    <property type="interactions" value="98"/>
</dbReference>
<dbReference type="ComplexPortal" id="CPX-2470">
    <property type="entry name" value="Vacuolar proton translocating ATPase complex, ATP6V0A1 variant"/>
</dbReference>
<dbReference type="ComplexPortal" id="CPX-6904">
    <property type="entry name" value="Vacuolar proton translocating ATPase complex, ATP6V0A2 variant"/>
</dbReference>
<dbReference type="ComplexPortal" id="CPX-6905">
    <property type="entry name" value="Vacuolar proton translocating ATPase complex, ATP6V0A3 variant"/>
</dbReference>
<dbReference type="ComplexPortal" id="CPX-6912">
    <property type="entry name" value="Vacuolar proton translocating ATPase complex, ATP6V0A4 variant"/>
</dbReference>
<dbReference type="FunCoup" id="O75348">
    <property type="interactions" value="2096"/>
</dbReference>
<dbReference type="IntAct" id="O75348">
    <property type="interactions" value="66"/>
</dbReference>
<dbReference type="MINT" id="O75348"/>
<dbReference type="STRING" id="9606.ENSP00000363162"/>
<dbReference type="DrugBank" id="DB01133">
    <property type="generic name" value="Tiludronic acid"/>
</dbReference>
<dbReference type="TCDB" id="3.A.2.2.4">
    <property type="family name" value="the h+- or na+-translocating f-type, v-type and a-type atpase (f-atpase) superfamily"/>
</dbReference>
<dbReference type="GlyGen" id="O75348">
    <property type="glycosylation" value="1 site, 1 O-linked glycan (1 site)"/>
</dbReference>
<dbReference type="iPTMnet" id="O75348"/>
<dbReference type="PhosphoSitePlus" id="O75348"/>
<dbReference type="BioMuta" id="ATP6V1G1"/>
<dbReference type="jPOST" id="O75348"/>
<dbReference type="MassIVE" id="O75348"/>
<dbReference type="PaxDb" id="9606-ENSP00000363162"/>
<dbReference type="PeptideAtlas" id="O75348"/>
<dbReference type="ProteomicsDB" id="49917"/>
<dbReference type="Pumba" id="O75348"/>
<dbReference type="Antibodypedia" id="3900">
    <property type="antibodies" value="151 antibodies from 25 providers"/>
</dbReference>
<dbReference type="DNASU" id="9550"/>
<dbReference type="Ensembl" id="ENST00000374050.4">
    <property type="protein sequence ID" value="ENSP00000363162.3"/>
    <property type="gene ID" value="ENSG00000136888.8"/>
</dbReference>
<dbReference type="GeneID" id="9550"/>
<dbReference type="KEGG" id="hsa:9550"/>
<dbReference type="MANE-Select" id="ENST00000374050.4">
    <property type="protein sequence ID" value="ENSP00000363162.3"/>
    <property type="RefSeq nucleotide sequence ID" value="NM_004888.4"/>
    <property type="RefSeq protein sequence ID" value="NP_004879.1"/>
</dbReference>
<dbReference type="UCSC" id="uc004bjc.4">
    <property type="organism name" value="human"/>
</dbReference>
<dbReference type="AGR" id="HGNC:864"/>
<dbReference type="CTD" id="9550"/>
<dbReference type="DisGeNET" id="9550"/>
<dbReference type="GeneCards" id="ATP6V1G1"/>
<dbReference type="HGNC" id="HGNC:864">
    <property type="gene designation" value="ATP6V1G1"/>
</dbReference>
<dbReference type="HPA" id="ENSG00000136888">
    <property type="expression patterns" value="Low tissue specificity"/>
</dbReference>
<dbReference type="MIM" id="607296">
    <property type="type" value="gene"/>
</dbReference>
<dbReference type="neXtProt" id="NX_O75348"/>
<dbReference type="OpenTargets" id="ENSG00000136888"/>
<dbReference type="PharmGKB" id="PA25163"/>
<dbReference type="VEuPathDB" id="HostDB:ENSG00000136888"/>
<dbReference type="eggNOG" id="KOG1772">
    <property type="taxonomic scope" value="Eukaryota"/>
</dbReference>
<dbReference type="GeneTree" id="ENSGT00940000154399"/>
<dbReference type="HOGENOM" id="CLU_125101_1_1_1"/>
<dbReference type="InParanoid" id="O75348"/>
<dbReference type="OMA" id="ARKYRQD"/>
<dbReference type="OrthoDB" id="250802at2759"/>
<dbReference type="PAN-GO" id="O75348">
    <property type="GO annotations" value="1 GO annotation based on evolutionary models"/>
</dbReference>
<dbReference type="PhylomeDB" id="O75348"/>
<dbReference type="TreeFam" id="TF313777"/>
<dbReference type="BioCyc" id="MetaCyc:HS06241-MONOMER"/>
<dbReference type="PathwayCommons" id="O75348"/>
<dbReference type="Reactome" id="R-HSA-1222556">
    <property type="pathway name" value="ROS and RNS production in phagocytes"/>
</dbReference>
<dbReference type="Reactome" id="R-HSA-77387">
    <property type="pathway name" value="Insulin receptor recycling"/>
</dbReference>
<dbReference type="Reactome" id="R-HSA-917977">
    <property type="pathway name" value="Transferrin endocytosis and recycling"/>
</dbReference>
<dbReference type="Reactome" id="R-HSA-9639288">
    <property type="pathway name" value="Amino acids regulate mTORC1"/>
</dbReference>
<dbReference type="Reactome" id="R-HSA-983712">
    <property type="pathway name" value="Ion channel transport"/>
</dbReference>
<dbReference type="Reactome" id="R-HSA-9857377">
    <property type="pathway name" value="Regulation of MITF-M-dependent genes involved in lysosome biogenesis and autophagy"/>
</dbReference>
<dbReference type="SignaLink" id="O75348"/>
<dbReference type="SIGNOR" id="O75348"/>
<dbReference type="BioGRID-ORCS" id="9550">
    <property type="hits" value="770 hits in 1177 CRISPR screens"/>
</dbReference>
<dbReference type="CD-CODE" id="91857CE7">
    <property type="entry name" value="Nucleolus"/>
</dbReference>
<dbReference type="CD-CODE" id="DEE660B4">
    <property type="entry name" value="Stress granule"/>
</dbReference>
<dbReference type="CD-CODE" id="FB4E32DD">
    <property type="entry name" value="Presynaptic clusters and postsynaptic densities"/>
</dbReference>
<dbReference type="ChiTaRS" id="ATP6V1G1">
    <property type="organism name" value="human"/>
</dbReference>
<dbReference type="GeneWiki" id="ATP6V1G1"/>
<dbReference type="GenomeRNAi" id="9550"/>
<dbReference type="Pharos" id="O75348">
    <property type="development level" value="Tbio"/>
</dbReference>
<dbReference type="PRO" id="PR:O75348"/>
<dbReference type="Proteomes" id="UP000005640">
    <property type="component" value="Chromosome 9"/>
</dbReference>
<dbReference type="RNAct" id="O75348">
    <property type="molecule type" value="protein"/>
</dbReference>
<dbReference type="Bgee" id="ENSG00000136888">
    <property type="expression patterns" value="Expressed in adrenal tissue and 209 other cell types or tissues"/>
</dbReference>
<dbReference type="ExpressionAtlas" id="O75348">
    <property type="expression patterns" value="baseline and differential"/>
</dbReference>
<dbReference type="GO" id="GO:0016324">
    <property type="term" value="C:apical plasma membrane"/>
    <property type="evidence" value="ECO:0007669"/>
    <property type="project" value="UniProtKB-SubCell"/>
</dbReference>
<dbReference type="GO" id="GO:0005829">
    <property type="term" value="C:cytosol"/>
    <property type="evidence" value="ECO:0000250"/>
    <property type="project" value="UniProtKB"/>
</dbReference>
<dbReference type="GO" id="GO:0070062">
    <property type="term" value="C:extracellular exosome"/>
    <property type="evidence" value="ECO:0007005"/>
    <property type="project" value="UniProtKB"/>
</dbReference>
<dbReference type="GO" id="GO:0098850">
    <property type="term" value="C:extrinsic component of synaptic vesicle membrane"/>
    <property type="evidence" value="ECO:0007669"/>
    <property type="project" value="Ensembl"/>
</dbReference>
<dbReference type="GO" id="GO:0005765">
    <property type="term" value="C:lysosomal membrane"/>
    <property type="evidence" value="ECO:0007005"/>
    <property type="project" value="UniProtKB"/>
</dbReference>
<dbReference type="GO" id="GO:0005886">
    <property type="term" value="C:plasma membrane"/>
    <property type="evidence" value="ECO:0000314"/>
    <property type="project" value="UniProtKB"/>
</dbReference>
<dbReference type="GO" id="GO:0030672">
    <property type="term" value="C:synaptic vesicle membrane"/>
    <property type="evidence" value="ECO:0000318"/>
    <property type="project" value="GO_Central"/>
</dbReference>
<dbReference type="GO" id="GO:0000221">
    <property type="term" value="C:vacuolar proton-transporting V-type ATPase, V1 domain"/>
    <property type="evidence" value="ECO:0000314"/>
    <property type="project" value="UniProtKB"/>
</dbReference>
<dbReference type="GO" id="GO:0016887">
    <property type="term" value="F:ATP hydrolysis activity"/>
    <property type="evidence" value="ECO:0000318"/>
    <property type="project" value="GO_Central"/>
</dbReference>
<dbReference type="GO" id="GO:0051117">
    <property type="term" value="F:ATPase binding"/>
    <property type="evidence" value="ECO:0000353"/>
    <property type="project" value="UniProtKB"/>
</dbReference>
<dbReference type="GO" id="GO:0046961">
    <property type="term" value="F:proton-transporting ATPase activity, rotational mechanism"/>
    <property type="evidence" value="ECO:0000318"/>
    <property type="project" value="GO_Central"/>
</dbReference>
<dbReference type="GO" id="GO:0036295">
    <property type="term" value="P:cellular response to increased oxygen levels"/>
    <property type="evidence" value="ECO:0000315"/>
    <property type="project" value="UniProtKB"/>
</dbReference>
<dbReference type="GO" id="GO:0006879">
    <property type="term" value="P:intracellular iron ion homeostasis"/>
    <property type="evidence" value="ECO:0000315"/>
    <property type="project" value="UniProtKB"/>
</dbReference>
<dbReference type="GO" id="GO:0016241">
    <property type="term" value="P:regulation of macroautophagy"/>
    <property type="evidence" value="ECO:0000303"/>
    <property type="project" value="ParkinsonsUK-UCL"/>
</dbReference>
<dbReference type="GO" id="GO:0097401">
    <property type="term" value="P:synaptic vesicle lumen acidification"/>
    <property type="evidence" value="ECO:0000318"/>
    <property type="project" value="GO_Central"/>
</dbReference>
<dbReference type="FunFam" id="1.20.5.2950:FF:000001">
    <property type="entry name" value="V-type proton ATPase subunit G"/>
    <property type="match status" value="1"/>
</dbReference>
<dbReference type="FunFam" id="1.20.5.620:FF:000004">
    <property type="entry name" value="V-type proton ATPase subunit G"/>
    <property type="match status" value="1"/>
</dbReference>
<dbReference type="Gene3D" id="1.20.5.2950">
    <property type="match status" value="1"/>
</dbReference>
<dbReference type="InterPro" id="IPR005124">
    <property type="entry name" value="V-ATPase_G"/>
</dbReference>
<dbReference type="NCBIfam" id="TIGR01147">
    <property type="entry name" value="V_ATP_synt_G"/>
    <property type="match status" value="1"/>
</dbReference>
<dbReference type="PANTHER" id="PTHR12713:SF12">
    <property type="entry name" value="V-TYPE PROTON ATPASE SUBUNIT G 1"/>
    <property type="match status" value="1"/>
</dbReference>
<dbReference type="PANTHER" id="PTHR12713">
    <property type="entry name" value="VACUOLAR ATP SYNTHASE SUBUNIT G"/>
    <property type="match status" value="1"/>
</dbReference>
<dbReference type="Pfam" id="PF03179">
    <property type="entry name" value="V-ATPase_G"/>
    <property type="match status" value="1"/>
</dbReference>
<sequence>MASQSQGIQQLLQAEKRAAEKVSEARKRKNRRLKQAKEEAQAEIEQYRLQREKEFKAKEAAALGSRGSCSTEVEKETQEKMTILQTYFRQNRDEVLDNLLAFVCDIRPEIHENYRING</sequence>
<reference key="1">
    <citation type="journal article" date="1998" name="Proc. Natl. Acad. Sci. U.S.A.">
        <title>Identification of genes expressed in human CD34(+) hematopoietic stem/progenitor cells by expressed sequence tags and efficient full-length cDNA cloning.</title>
        <authorList>
            <person name="Mao M."/>
            <person name="Fu G."/>
            <person name="Wu J.-S."/>
            <person name="Zhang Q.-H."/>
            <person name="Zhou J."/>
            <person name="Kan L.-X."/>
            <person name="Huang Q.-H."/>
            <person name="He K.-L."/>
            <person name="Gu B.-W."/>
            <person name="Han Z.-G."/>
            <person name="Shen Y."/>
            <person name="Gu J."/>
            <person name="Yu Y.-P."/>
            <person name="Xu S.-H."/>
            <person name="Wang Y.-X."/>
            <person name="Chen S.-J."/>
            <person name="Chen Z."/>
        </authorList>
    </citation>
    <scope>NUCLEOTIDE SEQUENCE [LARGE SCALE MRNA]</scope>
    <source>
        <tissue>Umbilical cord blood</tissue>
    </source>
</reference>
<reference key="2">
    <citation type="submission" date="2004-06" db="EMBL/GenBank/DDBJ databases">
        <title>Cloning of human full open reading frames in Gateway(TM) system entry vector (pDONR201).</title>
        <authorList>
            <person name="Ebert L."/>
            <person name="Schick M."/>
            <person name="Neubert P."/>
            <person name="Schatten R."/>
            <person name="Henze S."/>
            <person name="Korn B."/>
        </authorList>
    </citation>
    <scope>NUCLEOTIDE SEQUENCE [LARGE SCALE MRNA]</scope>
</reference>
<reference key="3">
    <citation type="journal article" date="2004" name="Nature">
        <title>DNA sequence and analysis of human chromosome 9.</title>
        <authorList>
            <person name="Humphray S.J."/>
            <person name="Oliver K."/>
            <person name="Hunt A.R."/>
            <person name="Plumb R.W."/>
            <person name="Loveland J.E."/>
            <person name="Howe K.L."/>
            <person name="Andrews T.D."/>
            <person name="Searle S."/>
            <person name="Hunt S.E."/>
            <person name="Scott C.E."/>
            <person name="Jones M.C."/>
            <person name="Ainscough R."/>
            <person name="Almeida J.P."/>
            <person name="Ambrose K.D."/>
            <person name="Ashwell R.I.S."/>
            <person name="Babbage A.K."/>
            <person name="Babbage S."/>
            <person name="Bagguley C.L."/>
            <person name="Bailey J."/>
            <person name="Banerjee R."/>
            <person name="Barker D.J."/>
            <person name="Barlow K.F."/>
            <person name="Bates K."/>
            <person name="Beasley H."/>
            <person name="Beasley O."/>
            <person name="Bird C.P."/>
            <person name="Bray-Allen S."/>
            <person name="Brown A.J."/>
            <person name="Brown J.Y."/>
            <person name="Burford D."/>
            <person name="Burrill W."/>
            <person name="Burton J."/>
            <person name="Carder C."/>
            <person name="Carter N.P."/>
            <person name="Chapman J.C."/>
            <person name="Chen Y."/>
            <person name="Clarke G."/>
            <person name="Clark S.Y."/>
            <person name="Clee C.M."/>
            <person name="Clegg S."/>
            <person name="Collier R.E."/>
            <person name="Corby N."/>
            <person name="Crosier M."/>
            <person name="Cummings A.T."/>
            <person name="Davies J."/>
            <person name="Dhami P."/>
            <person name="Dunn M."/>
            <person name="Dutta I."/>
            <person name="Dyer L.W."/>
            <person name="Earthrowl M.E."/>
            <person name="Faulkner L."/>
            <person name="Fleming C.J."/>
            <person name="Frankish A."/>
            <person name="Frankland J.A."/>
            <person name="French L."/>
            <person name="Fricker D.G."/>
            <person name="Garner P."/>
            <person name="Garnett J."/>
            <person name="Ghori J."/>
            <person name="Gilbert J.G.R."/>
            <person name="Glison C."/>
            <person name="Grafham D.V."/>
            <person name="Gribble S."/>
            <person name="Griffiths C."/>
            <person name="Griffiths-Jones S."/>
            <person name="Grocock R."/>
            <person name="Guy J."/>
            <person name="Hall R.E."/>
            <person name="Hammond S."/>
            <person name="Harley J.L."/>
            <person name="Harrison E.S.I."/>
            <person name="Hart E.A."/>
            <person name="Heath P.D."/>
            <person name="Henderson C.D."/>
            <person name="Hopkins B.L."/>
            <person name="Howard P.J."/>
            <person name="Howden P.J."/>
            <person name="Huckle E."/>
            <person name="Johnson C."/>
            <person name="Johnson D."/>
            <person name="Joy A.A."/>
            <person name="Kay M."/>
            <person name="Keenan S."/>
            <person name="Kershaw J.K."/>
            <person name="Kimberley A.M."/>
            <person name="King A."/>
            <person name="Knights A."/>
            <person name="Laird G.K."/>
            <person name="Langford C."/>
            <person name="Lawlor S."/>
            <person name="Leongamornlert D.A."/>
            <person name="Leversha M."/>
            <person name="Lloyd C."/>
            <person name="Lloyd D.M."/>
            <person name="Lovell J."/>
            <person name="Martin S."/>
            <person name="Mashreghi-Mohammadi M."/>
            <person name="Matthews L."/>
            <person name="McLaren S."/>
            <person name="McLay K.E."/>
            <person name="McMurray A."/>
            <person name="Milne S."/>
            <person name="Nickerson T."/>
            <person name="Nisbett J."/>
            <person name="Nordsiek G."/>
            <person name="Pearce A.V."/>
            <person name="Peck A.I."/>
            <person name="Porter K.M."/>
            <person name="Pandian R."/>
            <person name="Pelan S."/>
            <person name="Phillimore B."/>
            <person name="Povey S."/>
            <person name="Ramsey Y."/>
            <person name="Rand V."/>
            <person name="Scharfe M."/>
            <person name="Sehra H.K."/>
            <person name="Shownkeen R."/>
            <person name="Sims S.K."/>
            <person name="Skuce C.D."/>
            <person name="Smith M."/>
            <person name="Steward C.A."/>
            <person name="Swarbreck D."/>
            <person name="Sycamore N."/>
            <person name="Tester J."/>
            <person name="Thorpe A."/>
            <person name="Tracey A."/>
            <person name="Tromans A."/>
            <person name="Thomas D.W."/>
            <person name="Wall M."/>
            <person name="Wallis J.M."/>
            <person name="West A.P."/>
            <person name="Whitehead S.L."/>
            <person name="Willey D.L."/>
            <person name="Williams S.A."/>
            <person name="Wilming L."/>
            <person name="Wray P.W."/>
            <person name="Young L."/>
            <person name="Ashurst J.L."/>
            <person name="Coulson A."/>
            <person name="Blocker H."/>
            <person name="Durbin R.M."/>
            <person name="Sulston J.E."/>
            <person name="Hubbard T."/>
            <person name="Jackson M.J."/>
            <person name="Bentley D.R."/>
            <person name="Beck S."/>
            <person name="Rogers J."/>
            <person name="Dunham I."/>
        </authorList>
    </citation>
    <scope>NUCLEOTIDE SEQUENCE [LARGE SCALE GENOMIC DNA]</scope>
</reference>
<reference key="4">
    <citation type="submission" date="2005-07" db="EMBL/GenBank/DDBJ databases">
        <authorList>
            <person name="Mural R.J."/>
            <person name="Istrail S."/>
            <person name="Sutton G."/>
            <person name="Florea L."/>
            <person name="Halpern A.L."/>
            <person name="Mobarry C.M."/>
            <person name="Lippert R."/>
            <person name="Walenz B."/>
            <person name="Shatkay H."/>
            <person name="Dew I."/>
            <person name="Miller J.R."/>
            <person name="Flanigan M.J."/>
            <person name="Edwards N.J."/>
            <person name="Bolanos R."/>
            <person name="Fasulo D."/>
            <person name="Halldorsson B.V."/>
            <person name="Hannenhalli S."/>
            <person name="Turner R."/>
            <person name="Yooseph S."/>
            <person name="Lu F."/>
            <person name="Nusskern D.R."/>
            <person name="Shue B.C."/>
            <person name="Zheng X.H."/>
            <person name="Zhong F."/>
            <person name="Delcher A.L."/>
            <person name="Huson D.H."/>
            <person name="Kravitz S.A."/>
            <person name="Mouchard L."/>
            <person name="Reinert K."/>
            <person name="Remington K.A."/>
            <person name="Clark A.G."/>
            <person name="Waterman M.S."/>
            <person name="Eichler E.E."/>
            <person name="Adams M.D."/>
            <person name="Hunkapiller M.W."/>
            <person name="Myers E.W."/>
            <person name="Venter J.C."/>
        </authorList>
    </citation>
    <scope>NUCLEOTIDE SEQUENCE [LARGE SCALE GENOMIC DNA]</scope>
</reference>
<reference key="5">
    <citation type="journal article" date="2004" name="Genome Res.">
        <title>The status, quality, and expansion of the NIH full-length cDNA project: the Mammalian Gene Collection (MGC).</title>
        <authorList>
            <consortium name="The MGC Project Team"/>
        </authorList>
    </citation>
    <scope>NUCLEOTIDE SEQUENCE [LARGE SCALE MRNA]</scope>
    <source>
        <tissue>Skeletal muscle</tissue>
    </source>
</reference>
<reference key="6">
    <citation type="submission" date="2005-12" db="UniProtKB">
        <authorList>
            <person name="Kanor S."/>
            <person name="Bienvenut W.V."/>
            <person name="Quadroni M."/>
        </authorList>
    </citation>
    <scope>PROTEIN SEQUENCE OF 2-16; 38-48 AND 81-89</scope>
    <scope>CLEAVAGE OF INITIATOR METHIONINE</scope>
    <scope>ACETYLATION AT ALA-2</scope>
    <scope>IDENTIFICATION BY MASS SPECTROMETRY</scope>
    <source>
        <tissue>Melanoma</tissue>
    </source>
</reference>
<reference key="7">
    <citation type="journal article" date="2002" name="Gene">
        <title>Molecular cloning and characterization of novel tissue-specific isoforms of the human vacuolar H(+)-ATPase C, G and d subunits, and their evaluation in autosomal recessive distal renal tubular acidosis.</title>
        <authorList>
            <person name="Smith A.N."/>
            <person name="Borthwick K.J."/>
            <person name="Karet F.E."/>
        </authorList>
    </citation>
    <scope>TISSUE SPECIFICITY</scope>
</reference>
<reference key="8">
    <citation type="journal article" date="2011" name="BMC Syst. Biol.">
        <title>Initial characterization of the human central proteome.</title>
        <authorList>
            <person name="Burkard T.R."/>
            <person name="Planyavsky M."/>
            <person name="Kaupe I."/>
            <person name="Breitwieser F.P."/>
            <person name="Buerckstuemmer T."/>
            <person name="Bennett K.L."/>
            <person name="Superti-Furga G."/>
            <person name="Colinge J."/>
        </authorList>
    </citation>
    <scope>IDENTIFICATION BY MASS SPECTROMETRY [LARGE SCALE ANALYSIS]</scope>
</reference>
<reference key="9">
    <citation type="journal article" date="2015" name="Proteomics">
        <title>N-terminome analysis of the human mitochondrial proteome.</title>
        <authorList>
            <person name="Vaca Jacome A.S."/>
            <person name="Rabilloud T."/>
            <person name="Schaeffer-Reiss C."/>
            <person name="Rompais M."/>
            <person name="Ayoub D."/>
            <person name="Lane L."/>
            <person name="Bairoch A."/>
            <person name="Van Dorsselaer A."/>
            <person name="Carapito C."/>
        </authorList>
    </citation>
    <scope>IDENTIFICATION BY MASS SPECTROMETRY [LARGE SCALE ANALYSIS]</scope>
</reference>
<reference key="10">
    <citation type="journal article" date="2017" name="Elife">
        <title>The vacuolar-ATPase complex and assembly factors, TMEM199 and CCDC115, control HIF1alpha prolyl hydroxylation by regulating cellular iron levels.</title>
        <authorList>
            <person name="Miles A.L."/>
            <person name="Burr S.P."/>
            <person name="Grice G.L."/>
            <person name="Nathan J.A."/>
        </authorList>
    </citation>
    <scope>FUNCTION</scope>
</reference>
<reference key="11">
    <citation type="journal article" date="2018" name="Am. J. Physiol.">
        <title>H+-ATPase B1 subunit localizes to thick ascending limb and distal convoluted tubule of rodent and human kidney.</title>
        <authorList>
            <person name="Frische S."/>
            <person name="Chambrey R."/>
            <person name="Trepiccione F."/>
            <person name="Zamani R."/>
            <person name="Marcussen N."/>
            <person name="Alexander R.T."/>
            <person name="Skjoedt K."/>
            <person name="Svenningsen P."/>
            <person name="Dimke H."/>
        </authorList>
    </citation>
    <scope>SUBCELLULAR LOCATION</scope>
    <scope>TISSUE SPECIFICITY</scope>
</reference>
<reference key="12">
    <citation type="journal article" date="2020" name="Trends Biochem. Sci.">
        <title>Structure and Roles of V-type ATPases.</title>
        <authorList>
            <person name="Vasanthakumar T."/>
            <person name="Rubinstein J.L."/>
        </authorList>
    </citation>
    <scope>REVIEW</scope>
</reference>
<reference evidence="8 9 10 11" key="13">
    <citation type="journal article" date="2020" name="Mol. Cell">
        <title>Structures of a Complete Human V-ATPase Reveal Mechanisms of Its Assembly.</title>
        <authorList>
            <person name="Wang L."/>
            <person name="Wu D."/>
            <person name="Robinson C.V."/>
            <person name="Wu H."/>
            <person name="Fu T.M."/>
        </authorList>
    </citation>
    <scope>STRUCTURE BY ELECTRON MICROSCOPY (2.90 ANGSTROMS)</scope>
    <scope>FUNCTION</scope>
    <scope>IDENTIFICATION IN THE V-ATPASE COMPLEX</scope>
</reference>
<organism>
    <name type="scientific">Homo sapiens</name>
    <name type="common">Human</name>
    <dbReference type="NCBI Taxonomy" id="9606"/>
    <lineage>
        <taxon>Eukaryota</taxon>
        <taxon>Metazoa</taxon>
        <taxon>Chordata</taxon>
        <taxon>Craniata</taxon>
        <taxon>Vertebrata</taxon>
        <taxon>Euteleostomi</taxon>
        <taxon>Mammalia</taxon>
        <taxon>Eutheria</taxon>
        <taxon>Euarchontoglires</taxon>
        <taxon>Primates</taxon>
        <taxon>Haplorrhini</taxon>
        <taxon>Catarrhini</taxon>
        <taxon>Hominidae</taxon>
        <taxon>Homo</taxon>
    </lineage>
</organism>
<gene>
    <name type="primary">ATP6V1G1</name>
    <name type="synonym">ATP6G</name>
    <name type="synonym">ATP6G1</name>
    <name type="synonym">ATP6J</name>
</gene>
<keyword id="KW-0002">3D-structure</keyword>
<keyword id="KW-0007">Acetylation</keyword>
<keyword id="KW-1003">Cell membrane</keyword>
<keyword id="KW-0903">Direct protein sequencing</keyword>
<keyword id="KW-0375">Hydrogen ion transport</keyword>
<keyword id="KW-0406">Ion transport</keyword>
<keyword id="KW-0472">Membrane</keyword>
<keyword id="KW-1267">Proteomics identification</keyword>
<keyword id="KW-1185">Reference proteome</keyword>
<keyword id="KW-0813">Transport</keyword>
<name>VATG1_HUMAN</name>
<evidence type="ECO:0000269" key="1">
    <source>
    </source>
</evidence>
<evidence type="ECO:0000269" key="2">
    <source>
    </source>
</evidence>
<evidence type="ECO:0000269" key="3">
    <source>
    </source>
</evidence>
<evidence type="ECO:0000269" key="4">
    <source>
    </source>
</evidence>
<evidence type="ECO:0000269" key="5">
    <source ref="6"/>
</evidence>
<evidence type="ECO:0000303" key="6">
    <source>
    </source>
</evidence>
<evidence type="ECO:0000305" key="7"/>
<evidence type="ECO:0007744" key="8">
    <source>
        <dbReference type="PDB" id="6WLZ"/>
    </source>
</evidence>
<evidence type="ECO:0007744" key="9">
    <source>
        <dbReference type="PDB" id="6WM2"/>
    </source>
</evidence>
<evidence type="ECO:0007744" key="10">
    <source>
        <dbReference type="PDB" id="6WM3"/>
    </source>
</evidence>
<evidence type="ECO:0007744" key="11">
    <source>
        <dbReference type="PDB" id="6WM4"/>
    </source>
</evidence>
<evidence type="ECO:0007829" key="12">
    <source>
        <dbReference type="PDB" id="6WLZ"/>
    </source>
</evidence>
<accession>O75348</accession>
<accession>Q6IB33</accession>
<protein>
    <recommendedName>
        <fullName>V-type proton ATPase subunit G 1</fullName>
        <shortName>V-ATPase subunit G 1</shortName>
    </recommendedName>
    <alternativeName>
        <fullName>V-ATPase 13 kDa subunit 1</fullName>
    </alternativeName>
    <alternativeName>
        <fullName>Vacuolar proton pump subunit G 1</fullName>
    </alternativeName>
    <alternativeName>
        <fullName>Vacuolar proton pump subunit M16</fullName>
    </alternativeName>
</protein>